<reference key="1">
    <citation type="journal article" date="2008" name="PLoS Genet.">
        <title>Complete genome sequence of the complex carbohydrate-degrading marine bacterium, Saccharophagus degradans strain 2-40 T.</title>
        <authorList>
            <person name="Weiner R.M."/>
            <person name="Taylor L.E. II"/>
            <person name="Henrissat B."/>
            <person name="Hauser L."/>
            <person name="Land M."/>
            <person name="Coutinho P.M."/>
            <person name="Rancurel C."/>
            <person name="Saunders E.H."/>
            <person name="Longmire A.G."/>
            <person name="Zhang H."/>
            <person name="Bayer E.A."/>
            <person name="Gilbert H.J."/>
            <person name="Larimer F."/>
            <person name="Zhulin I.B."/>
            <person name="Ekborg N.A."/>
            <person name="Lamed R."/>
            <person name="Richardson P.M."/>
            <person name="Borovok I."/>
            <person name="Hutcheson S."/>
        </authorList>
    </citation>
    <scope>NUCLEOTIDE SEQUENCE [LARGE SCALE GENOMIC DNA]</scope>
    <source>
        <strain>2-40 / ATCC 43961 / DSM 17024</strain>
    </source>
</reference>
<sequence>MPNTPDRKYKRILLKLSGEQLMGDEGFGIDPKVLDKMALEIGQLVGIGVQVGLVIGGGNLFRGAALSRAGLDRVTGDHMGMLATVMNALAMRDALERSNISSTVMSAIPMHGVTDQYDRRKALRLLDNGEVVIFSAGTGNPFFTTDSAACLRGIEVNAELVLKATKVDGVYSADPMKDPTAVRYSKLTYEKVLTEQLGVMDLTAICLCQDHNMPVRVFQMDKQGALLNIVVGGDEGTLIQGKETEEA</sequence>
<accession>Q21HH4</accession>
<organism>
    <name type="scientific">Saccharophagus degradans (strain 2-40 / ATCC 43961 / DSM 17024)</name>
    <dbReference type="NCBI Taxonomy" id="203122"/>
    <lineage>
        <taxon>Bacteria</taxon>
        <taxon>Pseudomonadati</taxon>
        <taxon>Pseudomonadota</taxon>
        <taxon>Gammaproteobacteria</taxon>
        <taxon>Cellvibrionales</taxon>
        <taxon>Cellvibrionaceae</taxon>
        <taxon>Saccharophagus</taxon>
    </lineage>
</organism>
<feature type="chain" id="PRO_0000323948" description="Uridylate kinase">
    <location>
        <begin position="1"/>
        <end position="247"/>
    </location>
</feature>
<feature type="region of interest" description="Involved in allosteric activation by GTP" evidence="1">
    <location>
        <begin position="23"/>
        <end position="28"/>
    </location>
</feature>
<feature type="binding site" evidence="1">
    <location>
        <begin position="15"/>
        <end position="18"/>
    </location>
    <ligand>
        <name>ATP</name>
        <dbReference type="ChEBI" id="CHEBI:30616"/>
    </ligand>
</feature>
<feature type="binding site" evidence="1">
    <location>
        <position position="57"/>
    </location>
    <ligand>
        <name>UMP</name>
        <dbReference type="ChEBI" id="CHEBI:57865"/>
    </ligand>
</feature>
<feature type="binding site" evidence="1">
    <location>
        <position position="58"/>
    </location>
    <ligand>
        <name>ATP</name>
        <dbReference type="ChEBI" id="CHEBI:30616"/>
    </ligand>
</feature>
<feature type="binding site" evidence="1">
    <location>
        <position position="62"/>
    </location>
    <ligand>
        <name>ATP</name>
        <dbReference type="ChEBI" id="CHEBI:30616"/>
    </ligand>
</feature>
<feature type="binding site" evidence="1">
    <location>
        <position position="77"/>
    </location>
    <ligand>
        <name>UMP</name>
        <dbReference type="ChEBI" id="CHEBI:57865"/>
    </ligand>
</feature>
<feature type="binding site" evidence="1">
    <location>
        <begin position="138"/>
        <end position="145"/>
    </location>
    <ligand>
        <name>UMP</name>
        <dbReference type="ChEBI" id="CHEBI:57865"/>
    </ligand>
</feature>
<feature type="binding site" evidence="1">
    <location>
        <position position="165"/>
    </location>
    <ligand>
        <name>ATP</name>
        <dbReference type="ChEBI" id="CHEBI:30616"/>
    </ligand>
</feature>
<feature type="binding site" evidence="1">
    <location>
        <position position="171"/>
    </location>
    <ligand>
        <name>ATP</name>
        <dbReference type="ChEBI" id="CHEBI:30616"/>
    </ligand>
</feature>
<feature type="binding site" evidence="1">
    <location>
        <position position="174"/>
    </location>
    <ligand>
        <name>ATP</name>
        <dbReference type="ChEBI" id="CHEBI:30616"/>
    </ligand>
</feature>
<evidence type="ECO:0000255" key="1">
    <source>
        <dbReference type="HAMAP-Rule" id="MF_01220"/>
    </source>
</evidence>
<keyword id="KW-0021">Allosteric enzyme</keyword>
<keyword id="KW-0067">ATP-binding</keyword>
<keyword id="KW-0963">Cytoplasm</keyword>
<keyword id="KW-0418">Kinase</keyword>
<keyword id="KW-0547">Nucleotide-binding</keyword>
<keyword id="KW-0665">Pyrimidine biosynthesis</keyword>
<keyword id="KW-1185">Reference proteome</keyword>
<keyword id="KW-0808">Transferase</keyword>
<protein>
    <recommendedName>
        <fullName evidence="1">Uridylate kinase</fullName>
        <shortName evidence="1">UK</shortName>
        <ecNumber evidence="1">2.7.4.22</ecNumber>
    </recommendedName>
    <alternativeName>
        <fullName evidence="1">Uridine monophosphate kinase</fullName>
        <shortName evidence="1">UMP kinase</shortName>
        <shortName evidence="1">UMPK</shortName>
    </alternativeName>
</protein>
<gene>
    <name evidence="1" type="primary">pyrH</name>
    <name type="ordered locus">Sde_2595</name>
</gene>
<dbReference type="EC" id="2.7.4.22" evidence="1"/>
<dbReference type="EMBL" id="CP000282">
    <property type="protein sequence ID" value="ABD81855.1"/>
    <property type="molecule type" value="Genomic_DNA"/>
</dbReference>
<dbReference type="RefSeq" id="WP_011469072.1">
    <property type="nucleotide sequence ID" value="NC_007912.1"/>
</dbReference>
<dbReference type="SMR" id="Q21HH4"/>
<dbReference type="STRING" id="203122.Sde_2595"/>
<dbReference type="GeneID" id="98614258"/>
<dbReference type="KEGG" id="sde:Sde_2595"/>
<dbReference type="eggNOG" id="COG0528">
    <property type="taxonomic scope" value="Bacteria"/>
</dbReference>
<dbReference type="HOGENOM" id="CLU_033861_0_0_6"/>
<dbReference type="OrthoDB" id="9807458at2"/>
<dbReference type="UniPathway" id="UPA00159">
    <property type="reaction ID" value="UER00275"/>
</dbReference>
<dbReference type="Proteomes" id="UP000001947">
    <property type="component" value="Chromosome"/>
</dbReference>
<dbReference type="GO" id="GO:0005829">
    <property type="term" value="C:cytosol"/>
    <property type="evidence" value="ECO:0007669"/>
    <property type="project" value="TreeGrafter"/>
</dbReference>
<dbReference type="GO" id="GO:0005524">
    <property type="term" value="F:ATP binding"/>
    <property type="evidence" value="ECO:0007669"/>
    <property type="project" value="UniProtKB-KW"/>
</dbReference>
<dbReference type="GO" id="GO:0033862">
    <property type="term" value="F:UMP kinase activity"/>
    <property type="evidence" value="ECO:0007669"/>
    <property type="project" value="UniProtKB-EC"/>
</dbReference>
<dbReference type="GO" id="GO:0044210">
    <property type="term" value="P:'de novo' CTP biosynthetic process"/>
    <property type="evidence" value="ECO:0007669"/>
    <property type="project" value="UniProtKB-UniRule"/>
</dbReference>
<dbReference type="GO" id="GO:0006225">
    <property type="term" value="P:UDP biosynthetic process"/>
    <property type="evidence" value="ECO:0007669"/>
    <property type="project" value="TreeGrafter"/>
</dbReference>
<dbReference type="CDD" id="cd04254">
    <property type="entry name" value="AAK_UMPK-PyrH-Ec"/>
    <property type="match status" value="1"/>
</dbReference>
<dbReference type="FunFam" id="3.40.1160.10:FF:000001">
    <property type="entry name" value="Uridylate kinase"/>
    <property type="match status" value="1"/>
</dbReference>
<dbReference type="Gene3D" id="3.40.1160.10">
    <property type="entry name" value="Acetylglutamate kinase-like"/>
    <property type="match status" value="1"/>
</dbReference>
<dbReference type="HAMAP" id="MF_01220_B">
    <property type="entry name" value="PyrH_B"/>
    <property type="match status" value="1"/>
</dbReference>
<dbReference type="InterPro" id="IPR036393">
    <property type="entry name" value="AceGlu_kinase-like_sf"/>
</dbReference>
<dbReference type="InterPro" id="IPR001048">
    <property type="entry name" value="Asp/Glu/Uridylate_kinase"/>
</dbReference>
<dbReference type="InterPro" id="IPR011817">
    <property type="entry name" value="Uridylate_kinase"/>
</dbReference>
<dbReference type="InterPro" id="IPR015963">
    <property type="entry name" value="Uridylate_kinase_bac"/>
</dbReference>
<dbReference type="NCBIfam" id="TIGR02075">
    <property type="entry name" value="pyrH_bact"/>
    <property type="match status" value="1"/>
</dbReference>
<dbReference type="PANTHER" id="PTHR42833">
    <property type="entry name" value="URIDYLATE KINASE"/>
    <property type="match status" value="1"/>
</dbReference>
<dbReference type="PANTHER" id="PTHR42833:SF4">
    <property type="entry name" value="URIDYLATE KINASE PUMPKIN, CHLOROPLASTIC"/>
    <property type="match status" value="1"/>
</dbReference>
<dbReference type="Pfam" id="PF00696">
    <property type="entry name" value="AA_kinase"/>
    <property type="match status" value="1"/>
</dbReference>
<dbReference type="PIRSF" id="PIRSF005650">
    <property type="entry name" value="Uridylate_kin"/>
    <property type="match status" value="1"/>
</dbReference>
<dbReference type="SUPFAM" id="SSF53633">
    <property type="entry name" value="Carbamate kinase-like"/>
    <property type="match status" value="1"/>
</dbReference>
<name>PYRH_SACD2</name>
<comment type="function">
    <text evidence="1">Catalyzes the reversible phosphorylation of UMP to UDP.</text>
</comment>
<comment type="catalytic activity">
    <reaction evidence="1">
        <text>UMP + ATP = UDP + ADP</text>
        <dbReference type="Rhea" id="RHEA:24400"/>
        <dbReference type="ChEBI" id="CHEBI:30616"/>
        <dbReference type="ChEBI" id="CHEBI:57865"/>
        <dbReference type="ChEBI" id="CHEBI:58223"/>
        <dbReference type="ChEBI" id="CHEBI:456216"/>
        <dbReference type="EC" id="2.7.4.22"/>
    </reaction>
</comment>
<comment type="activity regulation">
    <text evidence="1">Allosterically activated by GTP. Inhibited by UTP.</text>
</comment>
<comment type="pathway">
    <text evidence="1">Pyrimidine metabolism; CTP biosynthesis via de novo pathway; UDP from UMP (UMPK route): step 1/1.</text>
</comment>
<comment type="subunit">
    <text evidence="1">Homohexamer.</text>
</comment>
<comment type="subcellular location">
    <subcellularLocation>
        <location evidence="1">Cytoplasm</location>
    </subcellularLocation>
</comment>
<comment type="similarity">
    <text evidence="1">Belongs to the UMP kinase family.</text>
</comment>
<proteinExistence type="inferred from homology"/>